<name>MNMC_AERS4</name>
<comment type="function">
    <text evidence="1">Catalyzes the last two steps in the biosynthesis of 5-methylaminomethyl-2-thiouridine (mnm(5)s(2)U) at the wobble position (U34) in tRNA. Catalyzes the FAD-dependent demodification of cmnm(5)s(2)U34 to nm(5)s(2)U34, followed by the transfer of a methyl group from S-adenosyl-L-methionine to nm(5)s(2)U34, to form mnm(5)s(2)U34.</text>
</comment>
<comment type="catalytic activity">
    <reaction evidence="1">
        <text>5-aminomethyl-2-thiouridine(34) in tRNA + S-adenosyl-L-methionine = 5-methylaminomethyl-2-thiouridine(34) in tRNA + S-adenosyl-L-homocysteine + H(+)</text>
        <dbReference type="Rhea" id="RHEA:19569"/>
        <dbReference type="Rhea" id="RHEA-COMP:10195"/>
        <dbReference type="Rhea" id="RHEA-COMP:10197"/>
        <dbReference type="ChEBI" id="CHEBI:15378"/>
        <dbReference type="ChEBI" id="CHEBI:57856"/>
        <dbReference type="ChEBI" id="CHEBI:59789"/>
        <dbReference type="ChEBI" id="CHEBI:74454"/>
        <dbReference type="ChEBI" id="CHEBI:74455"/>
        <dbReference type="EC" id="2.1.1.61"/>
    </reaction>
</comment>
<comment type="cofactor">
    <cofactor evidence="1">
        <name>FAD</name>
        <dbReference type="ChEBI" id="CHEBI:57692"/>
    </cofactor>
</comment>
<comment type="subcellular location">
    <subcellularLocation>
        <location evidence="1">Cytoplasm</location>
    </subcellularLocation>
</comment>
<comment type="similarity">
    <text evidence="1">In the N-terminal section; belongs to the methyltransferase superfamily. tRNA (mnm(5)s(2)U34)-methyltransferase family.</text>
</comment>
<comment type="similarity">
    <text evidence="1">In the C-terminal section; belongs to the DAO family.</text>
</comment>
<comment type="sequence caution" evidence="2">
    <conflict type="erroneous initiation">
        <sequence resource="EMBL-CDS" id="ABO90415"/>
    </conflict>
    <text>Extended N-terminus.</text>
</comment>
<reference key="1">
    <citation type="journal article" date="2008" name="BMC Genomics">
        <title>The genome of Aeromonas salmonicida subsp. salmonicida A449: insights into the evolution of a fish pathogen.</title>
        <authorList>
            <person name="Reith M.E."/>
            <person name="Singh R.K."/>
            <person name="Curtis B."/>
            <person name="Boyd J.M."/>
            <person name="Bouevitch A."/>
            <person name="Kimball J."/>
            <person name="Munholland J."/>
            <person name="Murphy C."/>
            <person name="Sarty D."/>
            <person name="Williams J."/>
            <person name="Nash J.H."/>
            <person name="Johnson S.C."/>
            <person name="Brown L.L."/>
        </authorList>
    </citation>
    <scope>NUCLEOTIDE SEQUENCE [LARGE SCALE GENOMIC DNA]</scope>
    <source>
        <strain>A449</strain>
    </source>
</reference>
<sequence length="665" mass="72208">MSQTSLHHARLDWNEAGTPVSSDFGDVYFSNDNGLSETRYVFLQQNGLPARFSHHNSDSFVIGETGFGTGLNFLATMKAFLEQAPQTGNGARLHFISFEKFPLTRDDLHKALTAWPELAPFSQALIAQWPLPVPGCHRLHFAGGRIRLDLWLGDIKEMLPQVPHGEQGLVDTWYLDGFAPAKNPEMWTQDLFDGLARLARPGATLSTFTSAGFVRRGLIAAGFAMKKVKGHGSKWAMLAGERVDKKPQRTIVPWYARPAGRDGEVVIIGGGIASAMTALSLVERGRKVTLLCEDHELATGASGNRQGALYPLLNGEHDALSRFYSLAFGYARQRLLSLAKHHPIAFDLCGVVQLGYDDKSTAKLAKMQQGPFPHALMRPLTPVEAEHECGLPSGHAGVSYPLGGWLCPADLTRAAIKEAQASGLLQVEYDCPVTAIHEQVDGWLVASREGRQWQAPNLVVAAGHQLPALSPFAELPLYPVRGQVSHVPTTATLSQLKTVLCYDGYLTPAHNAEHCIGASYGRNQSTQAFSAEEQAQNQARLQACLPDQAWPAEVDVSSNEARVGVRCASRDHLPVAGPIARLAGLADHYARLQRDQQNPAPLPLHPGLYVLGALGSRGLCSAPLCGELIASEICGDPLPLATDLLEALHPARYWIRKLLKGKPLN</sequence>
<evidence type="ECO:0000255" key="1">
    <source>
        <dbReference type="HAMAP-Rule" id="MF_01102"/>
    </source>
</evidence>
<evidence type="ECO:0000305" key="2"/>
<dbReference type="EC" id="2.1.1.61" evidence="1"/>
<dbReference type="EC" id="1.5.-.-" evidence="1"/>
<dbReference type="EMBL" id="CP000644">
    <property type="protein sequence ID" value="ABO90415.1"/>
    <property type="status" value="ALT_INIT"/>
    <property type="molecule type" value="Genomic_DNA"/>
</dbReference>
<dbReference type="SMR" id="A4SNE3"/>
<dbReference type="STRING" id="29491.GCA_000820065_01563"/>
<dbReference type="KEGG" id="asa:ASA_2366"/>
<dbReference type="eggNOG" id="COG0665">
    <property type="taxonomic scope" value="Bacteria"/>
</dbReference>
<dbReference type="eggNOG" id="COG4121">
    <property type="taxonomic scope" value="Bacteria"/>
</dbReference>
<dbReference type="HOGENOM" id="CLU_022427_1_0_6"/>
<dbReference type="Proteomes" id="UP000000225">
    <property type="component" value="Chromosome"/>
</dbReference>
<dbReference type="GO" id="GO:0005737">
    <property type="term" value="C:cytoplasm"/>
    <property type="evidence" value="ECO:0007669"/>
    <property type="project" value="UniProtKB-SubCell"/>
</dbReference>
<dbReference type="GO" id="GO:0050660">
    <property type="term" value="F:flavin adenine dinucleotide binding"/>
    <property type="evidence" value="ECO:0007669"/>
    <property type="project" value="UniProtKB-UniRule"/>
</dbReference>
<dbReference type="GO" id="GO:0016645">
    <property type="term" value="F:oxidoreductase activity, acting on the CH-NH group of donors"/>
    <property type="evidence" value="ECO:0007669"/>
    <property type="project" value="InterPro"/>
</dbReference>
<dbReference type="GO" id="GO:0004808">
    <property type="term" value="F:tRNA (5-methylaminomethyl-2-thiouridylate)(34)-methyltransferase activity"/>
    <property type="evidence" value="ECO:0007669"/>
    <property type="project" value="UniProtKB-EC"/>
</dbReference>
<dbReference type="GO" id="GO:0032259">
    <property type="term" value="P:methylation"/>
    <property type="evidence" value="ECO:0007669"/>
    <property type="project" value="UniProtKB-KW"/>
</dbReference>
<dbReference type="GO" id="GO:0002098">
    <property type="term" value="P:tRNA wobble uridine modification"/>
    <property type="evidence" value="ECO:0007669"/>
    <property type="project" value="TreeGrafter"/>
</dbReference>
<dbReference type="FunFam" id="3.40.50.150:FF:000107">
    <property type="entry name" value="tRNA 5-methylaminomethyl-2-thiouridine biosynthesis bifunctional protein MnmC"/>
    <property type="match status" value="1"/>
</dbReference>
<dbReference type="Gene3D" id="3.30.9.10">
    <property type="entry name" value="D-Amino Acid Oxidase, subunit A, domain 2"/>
    <property type="match status" value="1"/>
</dbReference>
<dbReference type="Gene3D" id="3.50.50.60">
    <property type="entry name" value="FAD/NAD(P)-binding domain"/>
    <property type="match status" value="1"/>
</dbReference>
<dbReference type="Gene3D" id="3.40.50.150">
    <property type="entry name" value="Vaccinia Virus protein VP39"/>
    <property type="match status" value="1"/>
</dbReference>
<dbReference type="HAMAP" id="MF_01102">
    <property type="entry name" value="MnmC"/>
    <property type="match status" value="1"/>
</dbReference>
<dbReference type="InterPro" id="IPR006076">
    <property type="entry name" value="FAD-dep_OxRdtase"/>
</dbReference>
<dbReference type="InterPro" id="IPR036188">
    <property type="entry name" value="FAD/NAD-bd_sf"/>
</dbReference>
<dbReference type="InterPro" id="IPR008471">
    <property type="entry name" value="MnmC-like_methylTransf"/>
</dbReference>
<dbReference type="InterPro" id="IPR029063">
    <property type="entry name" value="SAM-dependent_MTases_sf"/>
</dbReference>
<dbReference type="InterPro" id="IPR023032">
    <property type="entry name" value="tRNA_MAMT_biosynth_bifunc_MnmC"/>
</dbReference>
<dbReference type="InterPro" id="IPR047785">
    <property type="entry name" value="tRNA_MNMC2"/>
</dbReference>
<dbReference type="InterPro" id="IPR017610">
    <property type="entry name" value="tRNA_S-uridine_synth_MnmC_C"/>
</dbReference>
<dbReference type="NCBIfam" id="TIGR03197">
    <property type="entry name" value="MnmC_Cterm"/>
    <property type="match status" value="1"/>
</dbReference>
<dbReference type="NCBIfam" id="NF002481">
    <property type="entry name" value="PRK01747.1-2"/>
    <property type="match status" value="1"/>
</dbReference>
<dbReference type="NCBIfam" id="NF002484">
    <property type="entry name" value="PRK01747.1-5"/>
    <property type="match status" value="1"/>
</dbReference>
<dbReference type="NCBIfam" id="NF033855">
    <property type="entry name" value="tRNA_MNMC2"/>
    <property type="match status" value="1"/>
</dbReference>
<dbReference type="PANTHER" id="PTHR13847">
    <property type="entry name" value="SARCOSINE DEHYDROGENASE-RELATED"/>
    <property type="match status" value="1"/>
</dbReference>
<dbReference type="PANTHER" id="PTHR13847:SF283">
    <property type="entry name" value="TRNA 5-METHYLAMINOMETHYL-2-THIOURIDINE BIOSYNTHESIS BIFUNCTIONAL PROTEIN MNMC"/>
    <property type="match status" value="1"/>
</dbReference>
<dbReference type="Pfam" id="PF01266">
    <property type="entry name" value="DAO"/>
    <property type="match status" value="1"/>
</dbReference>
<dbReference type="Pfam" id="PF05430">
    <property type="entry name" value="Methyltransf_30"/>
    <property type="match status" value="1"/>
</dbReference>
<dbReference type="SUPFAM" id="SSF54373">
    <property type="entry name" value="FAD-linked reductases, C-terminal domain"/>
    <property type="match status" value="1"/>
</dbReference>
<dbReference type="SUPFAM" id="SSF51905">
    <property type="entry name" value="FAD/NAD(P)-binding domain"/>
    <property type="match status" value="1"/>
</dbReference>
<accession>A4SNE3</accession>
<keyword id="KW-0963">Cytoplasm</keyword>
<keyword id="KW-0274">FAD</keyword>
<keyword id="KW-0285">Flavoprotein</keyword>
<keyword id="KW-0489">Methyltransferase</keyword>
<keyword id="KW-0511">Multifunctional enzyme</keyword>
<keyword id="KW-0560">Oxidoreductase</keyword>
<keyword id="KW-0949">S-adenosyl-L-methionine</keyword>
<keyword id="KW-0808">Transferase</keyword>
<keyword id="KW-0819">tRNA processing</keyword>
<feature type="chain" id="PRO_0000347940" description="tRNA 5-methylaminomethyl-2-thiouridine biosynthesis bifunctional protein MnmC">
    <location>
        <begin position="1"/>
        <end position="665"/>
    </location>
</feature>
<feature type="region of interest" description="tRNA (mnm(5)s(2)U34)-methyltransferase">
    <location>
        <begin position="1"/>
        <end position="243"/>
    </location>
</feature>
<feature type="region of interest" description="FAD-dependent cmnm(5)s(2)U34 oxidoreductase">
    <location>
        <begin position="268"/>
        <end position="665"/>
    </location>
</feature>
<proteinExistence type="inferred from homology"/>
<gene>
    <name evidence="1" type="primary">mnmC</name>
    <name type="ordered locus">ASA_2366</name>
</gene>
<organism>
    <name type="scientific">Aeromonas salmonicida (strain A449)</name>
    <dbReference type="NCBI Taxonomy" id="382245"/>
    <lineage>
        <taxon>Bacteria</taxon>
        <taxon>Pseudomonadati</taxon>
        <taxon>Pseudomonadota</taxon>
        <taxon>Gammaproteobacteria</taxon>
        <taxon>Aeromonadales</taxon>
        <taxon>Aeromonadaceae</taxon>
        <taxon>Aeromonas</taxon>
    </lineage>
</organism>
<protein>
    <recommendedName>
        <fullName evidence="1">tRNA 5-methylaminomethyl-2-thiouridine biosynthesis bifunctional protein MnmC</fullName>
        <shortName evidence="1">tRNA mnm(5)s(2)U biosynthesis bifunctional protein</shortName>
    </recommendedName>
    <domain>
        <recommendedName>
            <fullName evidence="1">tRNA (mnm(5)s(2)U34)-methyltransferase</fullName>
            <ecNumber evidence="1">2.1.1.61</ecNumber>
        </recommendedName>
    </domain>
    <domain>
        <recommendedName>
            <fullName evidence="1">FAD-dependent cmnm(5)s(2)U34 oxidoreductase</fullName>
            <ecNumber evidence="1">1.5.-.-</ecNumber>
        </recommendedName>
    </domain>
</protein>